<dbReference type="EMBL" id="AY007280">
    <property type="protein sequence ID" value="AAG11393.1"/>
    <property type="molecule type" value="mRNA"/>
</dbReference>
<dbReference type="EMBL" id="AAFI02000019">
    <property type="protein sequence ID" value="EAL68974.1"/>
    <property type="molecule type" value="Genomic_DNA"/>
</dbReference>
<dbReference type="RefSeq" id="XP_642964.1">
    <property type="nucleotide sequence ID" value="XM_637872.1"/>
</dbReference>
<dbReference type="SMR" id="Q9GPF0"/>
<dbReference type="FunCoup" id="Q9GPF0">
    <property type="interactions" value="61"/>
</dbReference>
<dbReference type="STRING" id="44689.Q9GPF0"/>
<dbReference type="PaxDb" id="44689-DDB0219948"/>
<dbReference type="EnsemblProtists" id="EAL68974">
    <property type="protein sequence ID" value="EAL68974"/>
    <property type="gene ID" value="DDB_G0276945"/>
</dbReference>
<dbReference type="GeneID" id="8620834"/>
<dbReference type="KEGG" id="ddi:DDB_G0276945"/>
<dbReference type="dictyBase" id="DDB_G0276945">
    <property type="gene designation" value="apm4"/>
</dbReference>
<dbReference type="VEuPathDB" id="AmoebaDB:DDB_G0276945"/>
<dbReference type="eggNOG" id="KOG0937">
    <property type="taxonomic scope" value="Eukaryota"/>
</dbReference>
<dbReference type="HOGENOM" id="CLU_026996_5_0_1"/>
<dbReference type="InParanoid" id="Q9GPF0"/>
<dbReference type="OMA" id="DYGYIQN"/>
<dbReference type="PhylomeDB" id="Q9GPF0"/>
<dbReference type="Reactome" id="R-DDI-432720">
    <property type="pathway name" value="Lysosome Vesicle Biogenesis"/>
</dbReference>
<dbReference type="PRO" id="PR:Q9GPF0"/>
<dbReference type="Proteomes" id="UP000002195">
    <property type="component" value="Chromosome 2"/>
</dbReference>
<dbReference type="GO" id="GO:0030124">
    <property type="term" value="C:AP-4 adaptor complex"/>
    <property type="evidence" value="ECO:0000250"/>
    <property type="project" value="dictyBase"/>
</dbReference>
<dbReference type="GO" id="GO:0030131">
    <property type="term" value="C:clathrin adaptor complex"/>
    <property type="evidence" value="ECO:0007669"/>
    <property type="project" value="InterPro"/>
</dbReference>
<dbReference type="GO" id="GO:0031410">
    <property type="term" value="C:cytoplasmic vesicle"/>
    <property type="evidence" value="ECO:0000318"/>
    <property type="project" value="GO_Central"/>
</dbReference>
<dbReference type="GO" id="GO:0005829">
    <property type="term" value="C:cytosol"/>
    <property type="evidence" value="ECO:0007669"/>
    <property type="project" value="GOC"/>
</dbReference>
<dbReference type="GO" id="GO:0005769">
    <property type="term" value="C:early endosome"/>
    <property type="evidence" value="ECO:0007669"/>
    <property type="project" value="UniProtKB-SubCell"/>
</dbReference>
<dbReference type="GO" id="GO:0005802">
    <property type="term" value="C:trans-Golgi network"/>
    <property type="evidence" value="ECO:0000318"/>
    <property type="project" value="GO_Central"/>
</dbReference>
<dbReference type="GO" id="GO:0090160">
    <property type="term" value="P:Golgi to lysosome transport"/>
    <property type="evidence" value="ECO:0000318"/>
    <property type="project" value="GO_Central"/>
</dbReference>
<dbReference type="GO" id="GO:0006886">
    <property type="term" value="P:intracellular protein transport"/>
    <property type="evidence" value="ECO:0007669"/>
    <property type="project" value="InterPro"/>
</dbReference>
<dbReference type="GO" id="GO:0006605">
    <property type="term" value="P:protein targeting"/>
    <property type="evidence" value="ECO:0000318"/>
    <property type="project" value="GO_Central"/>
</dbReference>
<dbReference type="CDD" id="cd09253">
    <property type="entry name" value="AP-4_Mu4_Cterm"/>
    <property type="match status" value="1"/>
</dbReference>
<dbReference type="CDD" id="cd14838">
    <property type="entry name" value="AP4_Mu_N"/>
    <property type="match status" value="1"/>
</dbReference>
<dbReference type="FunFam" id="3.30.450.60:FF:000002">
    <property type="entry name" value="AP-2 complex subunit mu, putative"/>
    <property type="match status" value="1"/>
</dbReference>
<dbReference type="Gene3D" id="3.30.450.60">
    <property type="match status" value="1"/>
</dbReference>
<dbReference type="Gene3D" id="2.60.40.1170">
    <property type="entry name" value="Mu homology domain, subdomain B"/>
    <property type="match status" value="2"/>
</dbReference>
<dbReference type="InterPro" id="IPR050431">
    <property type="entry name" value="Adaptor_comp_med_subunit"/>
</dbReference>
<dbReference type="InterPro" id="IPR036168">
    <property type="entry name" value="AP2_Mu_C_sf"/>
</dbReference>
<dbReference type="InterPro" id="IPR001392">
    <property type="entry name" value="Clathrin_mu"/>
</dbReference>
<dbReference type="InterPro" id="IPR011012">
    <property type="entry name" value="Longin-like_dom_sf"/>
</dbReference>
<dbReference type="InterPro" id="IPR028565">
    <property type="entry name" value="MHD"/>
</dbReference>
<dbReference type="PANTHER" id="PTHR10529">
    <property type="entry name" value="AP COMPLEX SUBUNIT MU"/>
    <property type="match status" value="1"/>
</dbReference>
<dbReference type="Pfam" id="PF00928">
    <property type="entry name" value="Adap_comp_sub"/>
    <property type="match status" value="1"/>
</dbReference>
<dbReference type="PIRSF" id="PIRSF005992">
    <property type="entry name" value="Clathrin_mu"/>
    <property type="match status" value="1"/>
</dbReference>
<dbReference type="PRINTS" id="PR00314">
    <property type="entry name" value="CLATHRINADPT"/>
</dbReference>
<dbReference type="SUPFAM" id="SSF49447">
    <property type="entry name" value="Second domain of Mu2 adaptin subunit (ap50) of ap2 adaptor"/>
    <property type="match status" value="1"/>
</dbReference>
<dbReference type="SUPFAM" id="SSF64356">
    <property type="entry name" value="SNARE-like"/>
    <property type="match status" value="1"/>
</dbReference>
<dbReference type="PROSITE" id="PS51072">
    <property type="entry name" value="MHD"/>
    <property type="match status" value="1"/>
</dbReference>
<proteinExistence type="evidence at transcript level"/>
<evidence type="ECO:0000250" key="1">
    <source>
        <dbReference type="UniProtKB" id="O00189"/>
    </source>
</evidence>
<evidence type="ECO:0000255" key="2">
    <source>
        <dbReference type="PROSITE-ProRule" id="PRU00404"/>
    </source>
</evidence>
<evidence type="ECO:0000256" key="3">
    <source>
        <dbReference type="SAM" id="MobiDB-lite"/>
    </source>
</evidence>
<evidence type="ECO:0000269" key="4">
    <source>
    </source>
</evidence>
<evidence type="ECO:0000305" key="5"/>
<comment type="function">
    <text evidence="1">Probable component of an adaptor protein complex. Adaptor protein complexes are vesicle coat components involved both in vesicle formation and cargo selection. They control the vesicular transport of proteins in different trafficking pathways.</text>
</comment>
<comment type="subunit">
    <text evidence="1">May be part of the adaptor protein complex 4 (AP-4), a heterotetramer composed of two large adaptins (epsilon-type subunitand beta-type subunit), a medium adaptin (mu-type subunit) and a small adaptin (sigma-type).</text>
</comment>
<comment type="subcellular location">
    <subcellularLocation>
        <location evidence="1">Golgi apparatus</location>
        <location evidence="1">trans-Golgi network membrane</location>
        <topology evidence="1">Peripheral membrane protein</topology>
    </subcellularLocation>
    <subcellularLocation>
        <location evidence="1">Early endosome</location>
    </subcellularLocation>
</comment>
<comment type="developmental stage">
    <text evidence="4">Poorly expressed in vegetative cells. Well detected in migrating slugs and highly induced at the finger stage, reaching a peak level at 16 hours of development, and then decreasing to a very low level at 20 hours.</text>
</comment>
<comment type="similarity">
    <text evidence="5">Belongs to the adaptor complexes medium subunit family.</text>
</comment>
<sequence length="530" mass="58930">MFSQFFILNNKGETIIFKDYRFDISKDSNEIFFKHVQSMKSEITPAFNIDGINYLYIKKREMYFVFTTRLLVSPSLGFELLNRASKIIQDYTASLTEEAIRLNFILIYELLDELMDYGVPQSTGTETLKAFVFTPPKQIKSKQLESDSIIDNFLKATNKISVPPKQGVKPIHSGSKNSSSGGSSLSTNTVSKVVNNIVDSISGAATNLHNSTSGGGSGSGVTDADGDNEIYIDLCERLTVLYSSNGTILRNEITGKIQMKSYLRGNPALSLGLSPEFTFKTIANRDESNENEIDNNNIGGVSNLSAPSSNTTSFIVDDCSFHECAGSGFQPNNTINFKPPQGDFTLLKYRISNNNYTPFLVKTNLESTIRNRFDLVVTIRSNFSNKVVPNFIFVSIPVPKSTKSLTHSLDYGSQNQKVEYKQSTQAGNLVFWSIKKLRGGMETILRIQIHVDGATSSSSNNNQQQQQPQIDVGSTLRKEIGPIGLEFSIPQFSCSTLQIKFLKMLGSNISPIRWIRYITDSKSFVSRINN</sequence>
<gene>
    <name type="primary">apm4</name>
    <name type="ORF">DDB_G0276945</name>
</gene>
<feature type="chain" id="PRO_0000327981" description="AP-4 complex subunit mu">
    <location>
        <begin position="1"/>
        <end position="530"/>
    </location>
</feature>
<feature type="domain" description="MHD" evidence="2">
    <location>
        <begin position="227"/>
        <end position="527"/>
    </location>
</feature>
<feature type="region of interest" description="Disordered" evidence="3">
    <location>
        <begin position="164"/>
        <end position="187"/>
    </location>
</feature>
<feature type="compositionally biased region" description="Low complexity" evidence="3">
    <location>
        <begin position="173"/>
        <end position="186"/>
    </location>
</feature>
<keyword id="KW-0967">Endosome</keyword>
<keyword id="KW-0333">Golgi apparatus</keyword>
<keyword id="KW-0472">Membrane</keyword>
<keyword id="KW-0653">Protein transport</keyword>
<keyword id="KW-1185">Reference proteome</keyword>
<keyword id="KW-0813">Transport</keyword>
<accession>Q9GPF0</accession>
<accession>Q550G8</accession>
<accession>Q86AZ5</accession>
<reference key="1">
    <citation type="journal article" date="2001" name="Gene">
        <title>Identification of clathrin-adaptor medium chains in Dictyostelium discoideum: differential expression during development.</title>
        <authorList>
            <person name="de Chassey B."/>
            <person name="Dubois A."/>
            <person name="Lefkir Y."/>
            <person name="Letourneur F."/>
        </authorList>
    </citation>
    <scope>NUCLEOTIDE SEQUENCE [MRNA]</scope>
    <scope>DEVELOPMENTAL STAGE</scope>
</reference>
<reference key="2">
    <citation type="journal article" date="2002" name="Nature">
        <title>Sequence and analysis of chromosome 2 of Dictyostelium discoideum.</title>
        <authorList>
            <person name="Gloeckner G."/>
            <person name="Eichinger L."/>
            <person name="Szafranski K."/>
            <person name="Pachebat J.A."/>
            <person name="Bankier A.T."/>
            <person name="Dear P.H."/>
            <person name="Lehmann R."/>
            <person name="Baumgart C."/>
            <person name="Parra G."/>
            <person name="Abril J.F."/>
            <person name="Guigo R."/>
            <person name="Kumpf K."/>
            <person name="Tunggal B."/>
            <person name="Cox E.C."/>
            <person name="Quail M.A."/>
            <person name="Platzer M."/>
            <person name="Rosenthal A."/>
            <person name="Noegel A.A."/>
        </authorList>
    </citation>
    <scope>NUCLEOTIDE SEQUENCE [LARGE SCALE GENOMIC DNA]</scope>
    <source>
        <strain>AX4</strain>
    </source>
</reference>
<reference key="3">
    <citation type="journal article" date="2005" name="Nature">
        <title>The genome of the social amoeba Dictyostelium discoideum.</title>
        <authorList>
            <person name="Eichinger L."/>
            <person name="Pachebat J.A."/>
            <person name="Gloeckner G."/>
            <person name="Rajandream M.A."/>
            <person name="Sucgang R."/>
            <person name="Berriman M."/>
            <person name="Song J."/>
            <person name="Olsen R."/>
            <person name="Szafranski K."/>
            <person name="Xu Q."/>
            <person name="Tunggal B."/>
            <person name="Kummerfeld S."/>
            <person name="Madera M."/>
            <person name="Konfortov B.A."/>
            <person name="Rivero F."/>
            <person name="Bankier A.T."/>
            <person name="Lehmann R."/>
            <person name="Hamlin N."/>
            <person name="Davies R."/>
            <person name="Gaudet P."/>
            <person name="Fey P."/>
            <person name="Pilcher K."/>
            <person name="Chen G."/>
            <person name="Saunders D."/>
            <person name="Sodergren E.J."/>
            <person name="Davis P."/>
            <person name="Kerhornou A."/>
            <person name="Nie X."/>
            <person name="Hall N."/>
            <person name="Anjard C."/>
            <person name="Hemphill L."/>
            <person name="Bason N."/>
            <person name="Farbrother P."/>
            <person name="Desany B."/>
            <person name="Just E."/>
            <person name="Morio T."/>
            <person name="Rost R."/>
            <person name="Churcher C.M."/>
            <person name="Cooper J."/>
            <person name="Haydock S."/>
            <person name="van Driessche N."/>
            <person name="Cronin A."/>
            <person name="Goodhead I."/>
            <person name="Muzny D.M."/>
            <person name="Mourier T."/>
            <person name="Pain A."/>
            <person name="Lu M."/>
            <person name="Harper D."/>
            <person name="Lindsay R."/>
            <person name="Hauser H."/>
            <person name="James K.D."/>
            <person name="Quiles M."/>
            <person name="Madan Babu M."/>
            <person name="Saito T."/>
            <person name="Buchrieser C."/>
            <person name="Wardroper A."/>
            <person name="Felder M."/>
            <person name="Thangavelu M."/>
            <person name="Johnson D."/>
            <person name="Knights A."/>
            <person name="Loulseged H."/>
            <person name="Mungall K.L."/>
            <person name="Oliver K."/>
            <person name="Price C."/>
            <person name="Quail M.A."/>
            <person name="Urushihara H."/>
            <person name="Hernandez J."/>
            <person name="Rabbinowitsch E."/>
            <person name="Steffen D."/>
            <person name="Sanders M."/>
            <person name="Ma J."/>
            <person name="Kohara Y."/>
            <person name="Sharp S."/>
            <person name="Simmonds M.N."/>
            <person name="Spiegler S."/>
            <person name="Tivey A."/>
            <person name="Sugano S."/>
            <person name="White B."/>
            <person name="Walker D."/>
            <person name="Woodward J.R."/>
            <person name="Winckler T."/>
            <person name="Tanaka Y."/>
            <person name="Shaulsky G."/>
            <person name="Schleicher M."/>
            <person name="Weinstock G.M."/>
            <person name="Rosenthal A."/>
            <person name="Cox E.C."/>
            <person name="Chisholm R.L."/>
            <person name="Gibbs R.A."/>
            <person name="Loomis W.F."/>
            <person name="Platzer M."/>
            <person name="Kay R.R."/>
            <person name="Williams J.G."/>
            <person name="Dear P.H."/>
            <person name="Noegel A.A."/>
            <person name="Barrell B.G."/>
            <person name="Kuspa A."/>
        </authorList>
    </citation>
    <scope>NUCLEOTIDE SEQUENCE [LARGE SCALE GENOMIC DNA]</scope>
    <source>
        <strain>AX4</strain>
    </source>
</reference>
<organism>
    <name type="scientific">Dictyostelium discoideum</name>
    <name type="common">Social amoeba</name>
    <dbReference type="NCBI Taxonomy" id="44689"/>
    <lineage>
        <taxon>Eukaryota</taxon>
        <taxon>Amoebozoa</taxon>
        <taxon>Evosea</taxon>
        <taxon>Eumycetozoa</taxon>
        <taxon>Dictyostelia</taxon>
        <taxon>Dictyosteliales</taxon>
        <taxon>Dictyosteliaceae</taxon>
        <taxon>Dictyostelium</taxon>
    </lineage>
</organism>
<protein>
    <recommendedName>
        <fullName evidence="5">AP-4 complex subunit mu</fullName>
    </recommendedName>
    <alternativeName>
        <fullName>AP-4 adaptor complex mu4 subunit</fullName>
    </alternativeName>
    <alternativeName>
        <fullName>Adaptor-related protein complex 4 subunit mu</fullName>
    </alternativeName>
    <alternativeName>
        <fullName>Clathrin-adaptor medium chain Apm4</fullName>
    </alternativeName>
    <alternativeName>
        <fullName>Mu4-adaptin</fullName>
    </alternativeName>
</protein>
<name>AP4M_DICDI</name>